<feature type="chain" id="PRO_0000137780" description="Argininosuccinate lyase">
    <location>
        <begin position="1"/>
        <end position="459"/>
    </location>
</feature>
<accession>Q9CJ76</accession>
<comment type="catalytic activity">
    <reaction evidence="1">
        <text>2-(N(omega)-L-arginino)succinate = fumarate + L-arginine</text>
        <dbReference type="Rhea" id="RHEA:24020"/>
        <dbReference type="ChEBI" id="CHEBI:29806"/>
        <dbReference type="ChEBI" id="CHEBI:32682"/>
        <dbReference type="ChEBI" id="CHEBI:57472"/>
        <dbReference type="EC" id="4.3.2.1"/>
    </reaction>
</comment>
<comment type="pathway">
    <text evidence="1">Amino-acid biosynthesis; L-arginine biosynthesis; L-arginine from L-ornithine and carbamoyl phosphate: step 3/3.</text>
</comment>
<comment type="subcellular location">
    <subcellularLocation>
        <location evidence="1">Cytoplasm</location>
    </subcellularLocation>
</comment>
<comment type="similarity">
    <text evidence="1">Belongs to the lyase 1 family. Argininosuccinate lyase subfamily.</text>
</comment>
<keyword id="KW-0028">Amino-acid biosynthesis</keyword>
<keyword id="KW-0055">Arginine biosynthesis</keyword>
<keyword id="KW-0963">Cytoplasm</keyword>
<keyword id="KW-0456">Lyase</keyword>
<keyword id="KW-1185">Reference proteome</keyword>
<proteinExistence type="inferred from homology"/>
<gene>
    <name evidence="1" type="primary">argH</name>
    <name type="ordered locus">LL0125</name>
    <name type="ORF">L0114</name>
</gene>
<sequence length="459" mass="51900">MVEKLWGGRFEASLDKQTEEFGASIKFEQRLAPFDLKGSLAHVKMLGETGIITTEESKKIAEGLKKVEEKLLNGQIEFKMENEDIHMNMESYLHQEIGPLAGKLHTARSRNDQVVTDMHLYLKSILEAVLEALKVLRETIVKLAVNQIDTIMPGYTHLQHAQPISFGQHLMAYYQMLTRDFERFEFNVKHTDMNPLGAAALAGTTFPIDRMLTTKLLGFEKAYDNSMDAVSDRDFILEFLSNASLLMMHLSRFCEELLLWSSHEFKFVSLSDTYSTGSSIMPQKKNPDMAELIRGKTGRVYGNLTALLTVMKGLPLAYNKDFQEDKEGMFDSADTIITSLTVMNGMLSTLTVNRVNMEKSTEQDFSNATELADYLATKGLPFRKAHELVGLLVLDCIKKGIYLQDVNLQDYQMLSPLINEDVYEVLKSRTAVSRRNSLGGTGFESVKKQIEEAKKELQI</sequence>
<organism>
    <name type="scientific">Lactococcus lactis subsp. lactis (strain IL1403)</name>
    <name type="common">Streptococcus lactis</name>
    <dbReference type="NCBI Taxonomy" id="272623"/>
    <lineage>
        <taxon>Bacteria</taxon>
        <taxon>Bacillati</taxon>
        <taxon>Bacillota</taxon>
        <taxon>Bacilli</taxon>
        <taxon>Lactobacillales</taxon>
        <taxon>Streptococcaceae</taxon>
        <taxon>Lactococcus</taxon>
    </lineage>
</organism>
<protein>
    <recommendedName>
        <fullName evidence="1">Argininosuccinate lyase</fullName>
        <shortName evidence="1">ASAL</shortName>
        <ecNumber evidence="1">4.3.2.1</ecNumber>
    </recommendedName>
    <alternativeName>
        <fullName evidence="1">Arginosuccinase</fullName>
    </alternativeName>
</protein>
<name>ARLY_LACLA</name>
<reference key="1">
    <citation type="journal article" date="2001" name="Genome Res.">
        <title>The complete genome sequence of the lactic acid bacterium Lactococcus lactis ssp. lactis IL1403.</title>
        <authorList>
            <person name="Bolotin A."/>
            <person name="Wincker P."/>
            <person name="Mauger S."/>
            <person name="Jaillon O."/>
            <person name="Malarme K."/>
            <person name="Weissenbach J."/>
            <person name="Ehrlich S.D."/>
            <person name="Sorokin A."/>
        </authorList>
    </citation>
    <scope>NUCLEOTIDE SEQUENCE [LARGE SCALE GENOMIC DNA]</scope>
    <source>
        <strain>IL1403</strain>
    </source>
</reference>
<evidence type="ECO:0000255" key="1">
    <source>
        <dbReference type="HAMAP-Rule" id="MF_00006"/>
    </source>
</evidence>
<dbReference type="EC" id="4.3.2.1" evidence="1"/>
<dbReference type="EMBL" id="AE005176">
    <property type="protein sequence ID" value="AAK04223.1"/>
    <property type="molecule type" value="Genomic_DNA"/>
</dbReference>
<dbReference type="PIR" id="E86640">
    <property type="entry name" value="E86640"/>
</dbReference>
<dbReference type="RefSeq" id="NP_266281.1">
    <property type="nucleotide sequence ID" value="NC_002662.1"/>
</dbReference>
<dbReference type="RefSeq" id="WP_010905136.1">
    <property type="nucleotide sequence ID" value="NC_002662.1"/>
</dbReference>
<dbReference type="SMR" id="Q9CJ76"/>
<dbReference type="PaxDb" id="272623-L0114"/>
<dbReference type="EnsemblBacteria" id="AAK04223">
    <property type="protein sequence ID" value="AAK04223"/>
    <property type="gene ID" value="L0114"/>
</dbReference>
<dbReference type="KEGG" id="lla:L0114"/>
<dbReference type="PATRIC" id="fig|272623.7.peg.138"/>
<dbReference type="eggNOG" id="COG0165">
    <property type="taxonomic scope" value="Bacteria"/>
</dbReference>
<dbReference type="HOGENOM" id="CLU_027272_2_3_9"/>
<dbReference type="OrthoDB" id="9769623at2"/>
<dbReference type="UniPathway" id="UPA00068">
    <property type="reaction ID" value="UER00114"/>
</dbReference>
<dbReference type="Proteomes" id="UP000002196">
    <property type="component" value="Chromosome"/>
</dbReference>
<dbReference type="GO" id="GO:0005829">
    <property type="term" value="C:cytosol"/>
    <property type="evidence" value="ECO:0007669"/>
    <property type="project" value="TreeGrafter"/>
</dbReference>
<dbReference type="GO" id="GO:0004056">
    <property type="term" value="F:argininosuccinate lyase activity"/>
    <property type="evidence" value="ECO:0007669"/>
    <property type="project" value="UniProtKB-UniRule"/>
</dbReference>
<dbReference type="GO" id="GO:0042450">
    <property type="term" value="P:arginine biosynthetic process via ornithine"/>
    <property type="evidence" value="ECO:0007669"/>
    <property type="project" value="InterPro"/>
</dbReference>
<dbReference type="GO" id="GO:0006526">
    <property type="term" value="P:L-arginine biosynthetic process"/>
    <property type="evidence" value="ECO:0007669"/>
    <property type="project" value="UniProtKB-UniRule"/>
</dbReference>
<dbReference type="CDD" id="cd01359">
    <property type="entry name" value="Argininosuccinate_lyase"/>
    <property type="match status" value="1"/>
</dbReference>
<dbReference type="FunFam" id="1.10.275.10:FF:000002">
    <property type="entry name" value="Argininosuccinate lyase"/>
    <property type="match status" value="1"/>
</dbReference>
<dbReference type="FunFam" id="1.10.40.30:FF:000001">
    <property type="entry name" value="Argininosuccinate lyase"/>
    <property type="match status" value="1"/>
</dbReference>
<dbReference type="FunFam" id="1.20.200.10:FF:000002">
    <property type="entry name" value="Argininosuccinate lyase"/>
    <property type="match status" value="1"/>
</dbReference>
<dbReference type="Gene3D" id="1.10.40.30">
    <property type="entry name" value="Fumarase/aspartase (C-terminal domain)"/>
    <property type="match status" value="1"/>
</dbReference>
<dbReference type="Gene3D" id="1.20.200.10">
    <property type="entry name" value="Fumarase/aspartase (Central domain)"/>
    <property type="match status" value="1"/>
</dbReference>
<dbReference type="Gene3D" id="1.10.275.10">
    <property type="entry name" value="Fumarase/aspartase (N-terminal domain)"/>
    <property type="match status" value="1"/>
</dbReference>
<dbReference type="HAMAP" id="MF_00006">
    <property type="entry name" value="Arg_succ_lyase"/>
    <property type="match status" value="1"/>
</dbReference>
<dbReference type="InterPro" id="IPR029419">
    <property type="entry name" value="Arg_succ_lyase_C"/>
</dbReference>
<dbReference type="InterPro" id="IPR009049">
    <property type="entry name" value="Argininosuccinate_lyase"/>
</dbReference>
<dbReference type="InterPro" id="IPR024083">
    <property type="entry name" value="Fumarase/histidase_N"/>
</dbReference>
<dbReference type="InterPro" id="IPR020557">
    <property type="entry name" value="Fumarate_lyase_CS"/>
</dbReference>
<dbReference type="InterPro" id="IPR000362">
    <property type="entry name" value="Fumarate_lyase_fam"/>
</dbReference>
<dbReference type="InterPro" id="IPR022761">
    <property type="entry name" value="Fumarate_lyase_N"/>
</dbReference>
<dbReference type="InterPro" id="IPR008948">
    <property type="entry name" value="L-Aspartase-like"/>
</dbReference>
<dbReference type="NCBIfam" id="TIGR00838">
    <property type="entry name" value="argH"/>
    <property type="match status" value="1"/>
</dbReference>
<dbReference type="PANTHER" id="PTHR43814">
    <property type="entry name" value="ARGININOSUCCINATE LYASE"/>
    <property type="match status" value="1"/>
</dbReference>
<dbReference type="PANTHER" id="PTHR43814:SF1">
    <property type="entry name" value="ARGININOSUCCINATE LYASE"/>
    <property type="match status" value="1"/>
</dbReference>
<dbReference type="Pfam" id="PF14698">
    <property type="entry name" value="ASL_C2"/>
    <property type="match status" value="1"/>
</dbReference>
<dbReference type="Pfam" id="PF00206">
    <property type="entry name" value="Lyase_1"/>
    <property type="match status" value="1"/>
</dbReference>
<dbReference type="PRINTS" id="PR00145">
    <property type="entry name" value="ARGSUCLYASE"/>
</dbReference>
<dbReference type="PRINTS" id="PR00149">
    <property type="entry name" value="FUMRATELYASE"/>
</dbReference>
<dbReference type="SUPFAM" id="SSF48557">
    <property type="entry name" value="L-aspartase-like"/>
    <property type="match status" value="1"/>
</dbReference>
<dbReference type="PROSITE" id="PS00163">
    <property type="entry name" value="FUMARATE_LYASES"/>
    <property type="match status" value="1"/>
</dbReference>